<proteinExistence type="evidence at protein level"/>
<keyword id="KW-0002">3D-structure</keyword>
<keyword id="KW-0156">Chromatin regulator</keyword>
<keyword id="KW-0175">Coiled coil</keyword>
<keyword id="KW-0539">Nucleus</keyword>
<keyword id="KW-1185">Reference proteome</keyword>
<keyword id="KW-0678">Repressor</keyword>
<keyword id="KW-0804">Transcription</keyword>
<keyword id="KW-0805">Transcription regulation</keyword>
<comment type="function">
    <text evidence="3 6">Required for activity of HDA1 histone deacetylase complex. The HDA1 histone deacetylase complex is responsible for the deacetylation of lysine residues on the N-terminal part of the core histones (H2A, H2B, H3 and H4). Histone deacetylation gives a tag for epigenetic repression and plays an important role in transcriptional regulation, cell cycle progression and developmental events.</text>
</comment>
<comment type="subunit">
    <text evidence="3 6">Heterodimer with HDA3. Component of the HDA1 histone deacetylase complex composed of at least one HDA1 homodimer and one HDA2/HDA3 heterodimer. Interacts with HDA1 and HDA3.</text>
</comment>
<comment type="interaction">
    <interactant intactId="EBI-32800">
        <id>Q06629</id>
    </interactant>
    <interactant intactId="EBI-8206">
        <id>P53973</id>
        <label>HDA1</label>
    </interactant>
    <organismsDiffer>false</organismsDiffer>
    <experiments>7</experiments>
</comment>
<comment type="interaction">
    <interactant intactId="EBI-32800">
        <id>Q06629</id>
    </interactant>
    <interactant intactId="EBI-38663">
        <id>Q06623</id>
        <label>HDA3</label>
    </interactant>
    <organismsDiffer>false</organismsDiffer>
    <experiments>6</experiments>
</comment>
<comment type="subcellular location">
    <subcellularLocation>
        <location evidence="4">Nucleus</location>
    </subcellularLocation>
</comment>
<comment type="miscellaneous">
    <text evidence="5">Present with 1500 molecules/cell in log phase SD medium.</text>
</comment>
<comment type="similarity">
    <text evidence="7">Belongs to the HDA2/3 family. HDA2 subfamily.</text>
</comment>
<reference key="1">
    <citation type="journal article" date="1997" name="Nature">
        <title>The nucleotide sequence of Saccharomyces cerevisiae chromosome IV.</title>
        <authorList>
            <person name="Jacq C."/>
            <person name="Alt-Moerbe J."/>
            <person name="Andre B."/>
            <person name="Arnold W."/>
            <person name="Bahr A."/>
            <person name="Ballesta J.P.G."/>
            <person name="Bargues M."/>
            <person name="Baron L."/>
            <person name="Becker A."/>
            <person name="Biteau N."/>
            <person name="Bloecker H."/>
            <person name="Blugeon C."/>
            <person name="Boskovic J."/>
            <person name="Brandt P."/>
            <person name="Brueckner M."/>
            <person name="Buitrago M.J."/>
            <person name="Coster F."/>
            <person name="Delaveau T."/>
            <person name="del Rey F."/>
            <person name="Dujon B."/>
            <person name="Eide L.G."/>
            <person name="Garcia-Cantalejo J.M."/>
            <person name="Goffeau A."/>
            <person name="Gomez-Peris A."/>
            <person name="Granotier C."/>
            <person name="Hanemann V."/>
            <person name="Hankeln T."/>
            <person name="Hoheisel J.D."/>
            <person name="Jaeger W."/>
            <person name="Jimenez A."/>
            <person name="Jonniaux J.-L."/>
            <person name="Kraemer C."/>
            <person name="Kuester H."/>
            <person name="Laamanen P."/>
            <person name="Legros Y."/>
            <person name="Louis E.J."/>
            <person name="Moeller-Rieker S."/>
            <person name="Monnet A."/>
            <person name="Moro M."/>
            <person name="Mueller-Auer S."/>
            <person name="Nussbaumer B."/>
            <person name="Paricio N."/>
            <person name="Paulin L."/>
            <person name="Perea J."/>
            <person name="Perez-Alonso M."/>
            <person name="Perez-Ortin J.E."/>
            <person name="Pohl T.M."/>
            <person name="Prydz H."/>
            <person name="Purnelle B."/>
            <person name="Rasmussen S.W."/>
            <person name="Remacha M.A."/>
            <person name="Revuelta J.L."/>
            <person name="Rieger M."/>
            <person name="Salom D."/>
            <person name="Saluz H.P."/>
            <person name="Saiz J.E."/>
            <person name="Saren A.-M."/>
            <person name="Schaefer M."/>
            <person name="Scharfe M."/>
            <person name="Schmidt E.R."/>
            <person name="Schneider C."/>
            <person name="Scholler P."/>
            <person name="Schwarz S."/>
            <person name="Soler-Mira A."/>
            <person name="Urrestarazu L.A."/>
            <person name="Verhasselt P."/>
            <person name="Vissers S."/>
            <person name="Voet M."/>
            <person name="Volckaert G."/>
            <person name="Wagner G."/>
            <person name="Wambutt R."/>
            <person name="Wedler E."/>
            <person name="Wedler H."/>
            <person name="Woelfl S."/>
            <person name="Harris D.E."/>
            <person name="Bowman S."/>
            <person name="Brown D."/>
            <person name="Churcher C.M."/>
            <person name="Connor R."/>
            <person name="Dedman K."/>
            <person name="Gentles S."/>
            <person name="Hamlin N."/>
            <person name="Hunt S."/>
            <person name="Jones L."/>
            <person name="McDonald S."/>
            <person name="Murphy L.D."/>
            <person name="Niblett D."/>
            <person name="Odell C."/>
            <person name="Oliver K."/>
            <person name="Rajandream M.A."/>
            <person name="Richards C."/>
            <person name="Shore L."/>
            <person name="Walsh S.V."/>
            <person name="Barrell B.G."/>
            <person name="Dietrich F.S."/>
            <person name="Mulligan J.T."/>
            <person name="Allen E."/>
            <person name="Araujo R."/>
            <person name="Aviles E."/>
            <person name="Berno A."/>
            <person name="Carpenter J."/>
            <person name="Chen E."/>
            <person name="Cherry J.M."/>
            <person name="Chung E."/>
            <person name="Duncan M."/>
            <person name="Hunicke-Smith S."/>
            <person name="Hyman R.W."/>
            <person name="Komp C."/>
            <person name="Lashkari D."/>
            <person name="Lew H."/>
            <person name="Lin D."/>
            <person name="Mosedale D."/>
            <person name="Nakahara K."/>
            <person name="Namath A."/>
            <person name="Oefner P."/>
            <person name="Oh C."/>
            <person name="Petel F.X."/>
            <person name="Roberts D."/>
            <person name="Schramm S."/>
            <person name="Schroeder M."/>
            <person name="Shogren T."/>
            <person name="Shroff N."/>
            <person name="Winant A."/>
            <person name="Yelton M.A."/>
            <person name="Botstein D."/>
            <person name="Davis R.W."/>
            <person name="Johnston M."/>
            <person name="Andrews S."/>
            <person name="Brinkman R."/>
            <person name="Cooper J."/>
            <person name="Ding H."/>
            <person name="Du Z."/>
            <person name="Favello A."/>
            <person name="Fulton L."/>
            <person name="Gattung S."/>
            <person name="Greco T."/>
            <person name="Hallsworth K."/>
            <person name="Hawkins J."/>
            <person name="Hillier L.W."/>
            <person name="Jier M."/>
            <person name="Johnson D."/>
            <person name="Johnston L."/>
            <person name="Kirsten J."/>
            <person name="Kucaba T."/>
            <person name="Langston Y."/>
            <person name="Latreille P."/>
            <person name="Le T."/>
            <person name="Mardis E."/>
            <person name="Menezes S."/>
            <person name="Miller N."/>
            <person name="Nhan M."/>
            <person name="Pauley A."/>
            <person name="Peluso D."/>
            <person name="Rifkin L."/>
            <person name="Riles L."/>
            <person name="Taich A."/>
            <person name="Trevaskis E."/>
            <person name="Vignati D."/>
            <person name="Wilcox L."/>
            <person name="Wohldman P."/>
            <person name="Vaudin M."/>
            <person name="Wilson R."/>
            <person name="Waterston R."/>
            <person name="Albermann K."/>
            <person name="Hani J."/>
            <person name="Heumann K."/>
            <person name="Kleine K."/>
            <person name="Mewes H.-W."/>
            <person name="Zollner A."/>
            <person name="Zaccaria P."/>
        </authorList>
    </citation>
    <scope>NUCLEOTIDE SEQUENCE [LARGE SCALE GENOMIC DNA]</scope>
    <source>
        <strain>ATCC 204508 / S288c</strain>
    </source>
</reference>
<reference key="2">
    <citation type="journal article" date="2014" name="G3 (Bethesda)">
        <title>The reference genome sequence of Saccharomyces cerevisiae: Then and now.</title>
        <authorList>
            <person name="Engel S.R."/>
            <person name="Dietrich F.S."/>
            <person name="Fisk D.G."/>
            <person name="Binkley G."/>
            <person name="Balakrishnan R."/>
            <person name="Costanzo M.C."/>
            <person name="Dwight S.S."/>
            <person name="Hitz B.C."/>
            <person name="Karra K."/>
            <person name="Nash R.S."/>
            <person name="Weng S."/>
            <person name="Wong E.D."/>
            <person name="Lloyd P."/>
            <person name="Skrzypek M.S."/>
            <person name="Miyasato S.R."/>
            <person name="Simison M."/>
            <person name="Cherry J.M."/>
        </authorList>
    </citation>
    <scope>GENOME REANNOTATION</scope>
    <source>
        <strain>ATCC 204508 / S288c</strain>
    </source>
</reference>
<reference key="3">
    <citation type="journal article" date="1996" name="J. Biol. Chem.">
        <title>HDA1 and HDA3 are components of a yeast histone deacetylase (HDA) complex.</title>
        <authorList>
            <person name="Carmen A.A."/>
            <person name="Rundlett S.E."/>
            <person name="Grunstein M."/>
        </authorList>
    </citation>
    <scope>FUNCTION</scope>
    <scope>IDENTIFICATION IN THE HDA1 HISTONE DEACETYLASE COMPLEX</scope>
</reference>
<reference key="4">
    <citation type="journal article" date="2001" name="Proc. Natl. Acad. Sci. U.S.A.">
        <title>HDA2 and HDA3 are related proteins that interact with and are essential for the activity of the yeast histone deacetylase HDA1.</title>
        <authorList>
            <person name="Wu J."/>
            <person name="Carmen A.A."/>
            <person name="Kobayashi R."/>
            <person name="Suka N."/>
            <person name="Grunstein M."/>
        </authorList>
    </citation>
    <scope>FUNCTION</scope>
    <scope>INTERACTION WITH HDA1 AND HDA3</scope>
</reference>
<reference key="5">
    <citation type="journal article" date="2003" name="Nature">
        <title>Global analysis of protein localization in budding yeast.</title>
        <authorList>
            <person name="Huh W.-K."/>
            <person name="Falvo J.V."/>
            <person name="Gerke L.C."/>
            <person name="Carroll A.S."/>
            <person name="Howson R.W."/>
            <person name="Weissman J.S."/>
            <person name="O'Shea E.K."/>
        </authorList>
    </citation>
    <scope>SUBCELLULAR LOCATION [LARGE SCALE ANALYSIS]</scope>
</reference>
<reference key="6">
    <citation type="journal article" date="2003" name="Nature">
        <title>Global analysis of protein expression in yeast.</title>
        <authorList>
            <person name="Ghaemmaghami S."/>
            <person name="Huh W.-K."/>
            <person name="Bower K."/>
            <person name="Howson R.W."/>
            <person name="Belle A."/>
            <person name="Dephoure N."/>
            <person name="O'Shea E.K."/>
            <person name="Weissman J.S."/>
        </authorList>
    </citation>
    <scope>LEVEL OF PROTEIN EXPRESSION [LARGE SCALE ANALYSIS]</scope>
</reference>
<organism>
    <name type="scientific">Saccharomyces cerevisiae (strain ATCC 204508 / S288c)</name>
    <name type="common">Baker's yeast</name>
    <dbReference type="NCBI Taxonomy" id="559292"/>
    <lineage>
        <taxon>Eukaryota</taxon>
        <taxon>Fungi</taxon>
        <taxon>Dikarya</taxon>
        <taxon>Ascomycota</taxon>
        <taxon>Saccharomycotina</taxon>
        <taxon>Saccharomycetes</taxon>
        <taxon>Saccharomycetales</taxon>
        <taxon>Saccharomycetaceae</taxon>
        <taxon>Saccharomyces</taxon>
    </lineage>
</organism>
<feature type="chain" id="PRO_0000083930" description="HDA1 complex subunit 2">
    <location>
        <begin position="1"/>
        <end position="674"/>
    </location>
</feature>
<feature type="region of interest" description="Disordered" evidence="2">
    <location>
        <begin position="185"/>
        <end position="211"/>
    </location>
</feature>
<feature type="coiled-coil region" evidence="1">
    <location>
        <begin position="468"/>
        <end position="637"/>
    </location>
</feature>
<feature type="compositionally biased region" description="Polar residues" evidence="2">
    <location>
        <begin position="185"/>
        <end position="196"/>
    </location>
</feature>
<feature type="compositionally biased region" description="Low complexity" evidence="2">
    <location>
        <begin position="197"/>
        <end position="211"/>
    </location>
</feature>
<feature type="strand" evidence="8">
    <location>
        <begin position="11"/>
        <end position="16"/>
    </location>
</feature>
<feature type="helix" evidence="8">
    <location>
        <begin position="20"/>
        <end position="41"/>
    </location>
</feature>
<feature type="helix" evidence="8">
    <location>
        <begin position="70"/>
        <end position="85"/>
    </location>
</feature>
<feature type="helix" evidence="8">
    <location>
        <begin position="88"/>
        <end position="91"/>
    </location>
</feature>
<feature type="strand" evidence="8">
    <location>
        <begin position="92"/>
        <end position="94"/>
    </location>
</feature>
<feature type="helix" evidence="8">
    <location>
        <begin position="100"/>
        <end position="103"/>
    </location>
</feature>
<feature type="helix" evidence="8">
    <location>
        <begin position="106"/>
        <end position="110"/>
    </location>
</feature>
<feature type="helix" evidence="8">
    <location>
        <begin position="115"/>
        <end position="127"/>
    </location>
</feature>
<feature type="strand" evidence="8">
    <location>
        <begin position="140"/>
        <end position="147"/>
    </location>
</feature>
<feature type="helix" evidence="8">
    <location>
        <begin position="148"/>
        <end position="157"/>
    </location>
</feature>
<feature type="strand" evidence="8">
    <location>
        <begin position="159"/>
        <end position="162"/>
    </location>
</feature>
<feature type="strand" evidence="8">
    <location>
        <begin position="164"/>
        <end position="167"/>
    </location>
</feature>
<feature type="strand" evidence="8">
    <location>
        <begin position="169"/>
        <end position="171"/>
    </location>
</feature>
<feature type="strand" evidence="8">
    <location>
        <begin position="214"/>
        <end position="216"/>
    </location>
</feature>
<feature type="helix" evidence="8">
    <location>
        <begin position="222"/>
        <end position="226"/>
    </location>
</feature>
<feature type="turn" evidence="8">
    <location>
        <begin position="227"/>
        <end position="229"/>
    </location>
</feature>
<feature type="strand" evidence="8">
    <location>
        <begin position="237"/>
        <end position="242"/>
    </location>
</feature>
<feature type="helix" evidence="8">
    <location>
        <begin position="243"/>
        <end position="248"/>
    </location>
</feature>
<feature type="turn" evidence="8">
    <location>
        <begin position="252"/>
        <end position="254"/>
    </location>
</feature>
<feature type="strand" evidence="8">
    <location>
        <begin position="259"/>
        <end position="266"/>
    </location>
</feature>
<feature type="helix" evidence="8">
    <location>
        <begin position="273"/>
        <end position="281"/>
    </location>
</feature>
<feature type="strand" evidence="8">
    <location>
        <begin position="288"/>
        <end position="296"/>
    </location>
</feature>
<feature type="helix" evidence="8">
    <location>
        <begin position="299"/>
        <end position="306"/>
    </location>
</feature>
<feature type="helix" evidence="8">
    <location>
        <begin position="327"/>
        <end position="340"/>
    </location>
</feature>
<feature type="turn" evidence="8">
    <location>
        <begin position="341"/>
        <end position="343"/>
    </location>
</feature>
<feature type="helix" evidence="8">
    <location>
        <begin position="354"/>
        <end position="362"/>
    </location>
</feature>
<feature type="strand" evidence="8">
    <location>
        <begin position="390"/>
        <end position="392"/>
    </location>
</feature>
<feature type="helix" evidence="8">
    <location>
        <begin position="414"/>
        <end position="436"/>
    </location>
</feature>
<feature type="turn" evidence="8">
    <location>
        <begin position="437"/>
        <end position="439"/>
    </location>
</feature>
<feature type="helix" evidence="8">
    <location>
        <begin position="440"/>
        <end position="510"/>
    </location>
</feature>
<feature type="helix" evidence="8">
    <location>
        <begin position="518"/>
        <end position="600"/>
    </location>
</feature>
<feature type="strand" evidence="8">
    <location>
        <begin position="629"/>
        <end position="632"/>
    </location>
</feature>
<name>HDA2_YEAST</name>
<sequence length="674" mass="77059">MSRKNSKKLKVYYLPVTLTQFQKDLSEILISLHAKSFKASIIGEPQADAVNKPSGLPAGPETHPYPTLSQRQLTYIFDSNIRAIANHPSLLVDHYMPRQLLRMEPTESSIAGSHKFQVLNQLINSICFRDREGSPNEVIKCAIIAHSIKELDLLEGLILGKKFRTKRLSGTSLYNEKHKFPNLPTVDSTINKDGTPNSVSSTSSNSNSTSYTGYSKDDYDYSVKRNLKKRKINTDDWLFLATTKHLKHDQYLLANYDIDMIISFDPMLEVELPALQVLRNNANKDIPIIKLLVQNSPDHYLLDSEIKNSSVKSSHLSNNGHVDDSQEYEEIKSSLLYFLQARNAPVNNCEIDYIKLVKCCLEGKDCNNILPVLDLITLDEASKDSSDSGFWQPQLTKLQYSSTELPLWDGPLDIKTYQTELMHRAVIRLRDIQDEYAKGTVPLYEKRLNETQRQNQLDEIKNSVGLTFKKKQEVEKSINDSEKRLKHAMTESTKLQNKINHLLKNRQELENFNKLPSNTISSENHLEEGSALADKLKEYIDKNATLFNKLKELQQANAEKSKLNDELRSKYQIESSKAAESAQTLKILQESMKSLENEVNGPLTKFSTESLKKELERLQNDFQSLKARNKFLKNYITLMNRQYDLKNKNNVQVEKAAANGTRFRSTRSNTPNYT</sequence>
<gene>
    <name type="primary">HDA2</name>
    <name type="synonym">PLO2</name>
    <name type="ordered locus">YDR295C</name>
</gene>
<evidence type="ECO:0000255" key="1"/>
<evidence type="ECO:0000256" key="2">
    <source>
        <dbReference type="SAM" id="MobiDB-lite"/>
    </source>
</evidence>
<evidence type="ECO:0000269" key="3">
    <source>
    </source>
</evidence>
<evidence type="ECO:0000269" key="4">
    <source>
    </source>
</evidence>
<evidence type="ECO:0000269" key="5">
    <source>
    </source>
</evidence>
<evidence type="ECO:0000269" key="6">
    <source>
    </source>
</evidence>
<evidence type="ECO:0000305" key="7"/>
<evidence type="ECO:0007829" key="8">
    <source>
        <dbReference type="PDB" id="6Z6F"/>
    </source>
</evidence>
<accession>Q06629</accession>
<accession>D6VSS4</accession>
<dbReference type="EMBL" id="U28374">
    <property type="protein sequence ID" value="AAB64731.1"/>
    <property type="molecule type" value="Genomic_DNA"/>
</dbReference>
<dbReference type="EMBL" id="BK006938">
    <property type="protein sequence ID" value="DAA12134.1"/>
    <property type="molecule type" value="Genomic_DNA"/>
</dbReference>
<dbReference type="PIR" id="S61181">
    <property type="entry name" value="S61181"/>
</dbReference>
<dbReference type="RefSeq" id="NP_010581.3">
    <property type="nucleotide sequence ID" value="NM_001180603.3"/>
</dbReference>
<dbReference type="PDB" id="6Z6F">
    <property type="method" value="EM"/>
    <property type="resolution" value="3.11 A"/>
    <property type="chains" value="C=10-638"/>
</dbReference>
<dbReference type="PDB" id="6Z6H">
    <property type="method" value="EM"/>
    <property type="resolution" value="8.55 A"/>
    <property type="chains" value="C/I=10-638"/>
</dbReference>
<dbReference type="PDB" id="6Z6O">
    <property type="method" value="EM"/>
    <property type="resolution" value="3.80 A"/>
    <property type="chains" value="C/G/K/O=10-638"/>
</dbReference>
<dbReference type="PDB" id="6Z6P">
    <property type="method" value="EM"/>
    <property type="resolution" value="4.43 A"/>
    <property type="chains" value="N=10-638"/>
</dbReference>
<dbReference type="PDBsum" id="6Z6F"/>
<dbReference type="PDBsum" id="6Z6H"/>
<dbReference type="PDBsum" id="6Z6O"/>
<dbReference type="PDBsum" id="6Z6P"/>
<dbReference type="EMDB" id="EMD-11092"/>
<dbReference type="EMDB" id="EMD-11094"/>
<dbReference type="EMDB" id="EMD-11101"/>
<dbReference type="EMDB" id="EMD-11102"/>
<dbReference type="SMR" id="Q06629"/>
<dbReference type="BioGRID" id="32347">
    <property type="interactions" value="376"/>
</dbReference>
<dbReference type="ComplexPortal" id="CPX-1884">
    <property type="entry name" value="HDA1 histone deacetylase complex"/>
</dbReference>
<dbReference type="DIP" id="DIP-2988N"/>
<dbReference type="FunCoup" id="Q06629">
    <property type="interactions" value="139"/>
</dbReference>
<dbReference type="IntAct" id="Q06629">
    <property type="interactions" value="16"/>
</dbReference>
<dbReference type="MINT" id="Q06629"/>
<dbReference type="STRING" id="4932.YDR295C"/>
<dbReference type="iPTMnet" id="Q06629"/>
<dbReference type="PaxDb" id="4932-YDR295C"/>
<dbReference type="PeptideAtlas" id="Q06629"/>
<dbReference type="EnsemblFungi" id="YDR295C_mRNA">
    <property type="protein sequence ID" value="YDR295C"/>
    <property type="gene ID" value="YDR295C"/>
</dbReference>
<dbReference type="GeneID" id="851889"/>
<dbReference type="KEGG" id="sce:YDR295C"/>
<dbReference type="AGR" id="SGD:S000002703"/>
<dbReference type="SGD" id="S000002703">
    <property type="gene designation" value="HDA2"/>
</dbReference>
<dbReference type="VEuPathDB" id="FungiDB:YDR295C"/>
<dbReference type="eggNOG" id="ENOG502QU6B">
    <property type="taxonomic scope" value="Eukaryota"/>
</dbReference>
<dbReference type="HOGENOM" id="CLU_409446_0_0_1"/>
<dbReference type="InParanoid" id="Q06629"/>
<dbReference type="OMA" id="DHYMPRQ"/>
<dbReference type="OrthoDB" id="4034449at2759"/>
<dbReference type="BioCyc" id="YEAST:G3O-29857-MONOMER"/>
<dbReference type="BioGRID-ORCS" id="851889">
    <property type="hits" value="1 hit in 10 CRISPR screens"/>
</dbReference>
<dbReference type="PRO" id="PR:Q06629"/>
<dbReference type="Proteomes" id="UP000002311">
    <property type="component" value="Chromosome IV"/>
</dbReference>
<dbReference type="RNAct" id="Q06629">
    <property type="molecule type" value="protein"/>
</dbReference>
<dbReference type="GO" id="GO:0005829">
    <property type="term" value="C:cytosol"/>
    <property type="evidence" value="ECO:0000314"/>
    <property type="project" value="SGD"/>
</dbReference>
<dbReference type="GO" id="GO:0070823">
    <property type="term" value="C:HDA1 complex"/>
    <property type="evidence" value="ECO:0000314"/>
    <property type="project" value="SGD"/>
</dbReference>
<dbReference type="GO" id="GO:0005634">
    <property type="term" value="C:nucleus"/>
    <property type="evidence" value="ECO:0000314"/>
    <property type="project" value="SGD"/>
</dbReference>
<dbReference type="GO" id="GO:0003682">
    <property type="term" value="F:chromatin binding"/>
    <property type="evidence" value="ECO:0000314"/>
    <property type="project" value="SGD"/>
</dbReference>
<dbReference type="GO" id="GO:0003677">
    <property type="term" value="F:DNA binding"/>
    <property type="evidence" value="ECO:0000314"/>
    <property type="project" value="SGD"/>
</dbReference>
<dbReference type="GO" id="GO:0006325">
    <property type="term" value="P:chromatin organization"/>
    <property type="evidence" value="ECO:0007669"/>
    <property type="project" value="UniProtKB-KW"/>
</dbReference>
<dbReference type="GO" id="GO:0000122">
    <property type="term" value="P:negative regulation of transcription by RNA polymerase II"/>
    <property type="evidence" value="ECO:0000314"/>
    <property type="project" value="ComplexPortal"/>
</dbReference>
<dbReference type="GO" id="GO:0006357">
    <property type="term" value="P:regulation of transcription by RNA polymerase II"/>
    <property type="evidence" value="ECO:0000318"/>
    <property type="project" value="GO_Central"/>
</dbReference>
<dbReference type="GO" id="GO:0031047">
    <property type="term" value="P:regulatory ncRNA-mediated gene silencing"/>
    <property type="evidence" value="ECO:0000315"/>
    <property type="project" value="SGD"/>
</dbReference>
<dbReference type="Gene3D" id="3.40.50.12360">
    <property type="match status" value="1"/>
</dbReference>
<dbReference type="InterPro" id="IPR038609">
    <property type="entry name" value="HDA1_su2/3_sf"/>
</dbReference>
<dbReference type="InterPro" id="IPR021006">
    <property type="entry name" value="Hda2/3"/>
</dbReference>
<dbReference type="PANTHER" id="PTHR31882:SF11">
    <property type="entry name" value="HDA1 COMPLEX SUBUNIT 2"/>
    <property type="match status" value="1"/>
</dbReference>
<dbReference type="PANTHER" id="PTHR31882">
    <property type="entry name" value="TNFAIP3-INTERACTING PROTEIN COILED COIL FAMILY MEMBER"/>
    <property type="match status" value="1"/>
</dbReference>
<dbReference type="Pfam" id="PF11496">
    <property type="entry name" value="HDA2-3"/>
    <property type="match status" value="1"/>
</dbReference>
<protein>
    <recommendedName>
        <fullName>HDA1 complex subunit 2</fullName>
    </recommendedName>
    <alternativeName>
        <fullName>Histone deacetylase complex 1 subunit 2</fullName>
    </alternativeName>
</protein>